<comment type="function">
    <text evidence="1">Catalyzes the oxidation of 5,10-methylenetetrahydrofolate to 5,10-methenyltetrahydrofolate and then the hydrolysis of 5,10-methenyltetrahydrofolate to 10-formyltetrahydrofolate.</text>
</comment>
<comment type="catalytic activity">
    <reaction evidence="1">
        <text>(6R)-5,10-methylene-5,6,7,8-tetrahydrofolate + NADP(+) = (6R)-5,10-methenyltetrahydrofolate + NADPH</text>
        <dbReference type="Rhea" id="RHEA:22812"/>
        <dbReference type="ChEBI" id="CHEBI:15636"/>
        <dbReference type="ChEBI" id="CHEBI:57455"/>
        <dbReference type="ChEBI" id="CHEBI:57783"/>
        <dbReference type="ChEBI" id="CHEBI:58349"/>
        <dbReference type="EC" id="1.5.1.5"/>
    </reaction>
</comment>
<comment type="catalytic activity">
    <reaction evidence="1">
        <text>(6R)-5,10-methenyltetrahydrofolate + H2O = (6R)-10-formyltetrahydrofolate + H(+)</text>
        <dbReference type="Rhea" id="RHEA:23700"/>
        <dbReference type="ChEBI" id="CHEBI:15377"/>
        <dbReference type="ChEBI" id="CHEBI:15378"/>
        <dbReference type="ChEBI" id="CHEBI:57455"/>
        <dbReference type="ChEBI" id="CHEBI:195366"/>
        <dbReference type="EC" id="3.5.4.9"/>
    </reaction>
</comment>
<comment type="pathway">
    <text evidence="1">One-carbon metabolism; tetrahydrofolate interconversion.</text>
</comment>
<comment type="subunit">
    <text evidence="1">Homodimer.</text>
</comment>
<comment type="similarity">
    <text evidence="1">Belongs to the tetrahydrofolate dehydrogenase/cyclohydrolase family.</text>
</comment>
<dbReference type="EC" id="1.5.1.5" evidence="1"/>
<dbReference type="EC" id="3.5.4.9" evidence="1"/>
<dbReference type="EMBL" id="CP000474">
    <property type="protein sequence ID" value="ABM06814.1"/>
    <property type="molecule type" value="Genomic_DNA"/>
</dbReference>
<dbReference type="RefSeq" id="WP_011773238.1">
    <property type="nucleotide sequence ID" value="NC_008711.1"/>
</dbReference>
<dbReference type="SMR" id="A1R228"/>
<dbReference type="STRING" id="290340.AAur_0482"/>
<dbReference type="KEGG" id="aau:AAur_0482"/>
<dbReference type="eggNOG" id="COG0190">
    <property type="taxonomic scope" value="Bacteria"/>
</dbReference>
<dbReference type="HOGENOM" id="CLU_034045_2_1_11"/>
<dbReference type="OrthoDB" id="9803580at2"/>
<dbReference type="UniPathway" id="UPA00193"/>
<dbReference type="Proteomes" id="UP000000637">
    <property type="component" value="Chromosome"/>
</dbReference>
<dbReference type="GO" id="GO:0005829">
    <property type="term" value="C:cytosol"/>
    <property type="evidence" value="ECO:0007669"/>
    <property type="project" value="TreeGrafter"/>
</dbReference>
<dbReference type="GO" id="GO:0004477">
    <property type="term" value="F:methenyltetrahydrofolate cyclohydrolase activity"/>
    <property type="evidence" value="ECO:0007669"/>
    <property type="project" value="UniProtKB-UniRule"/>
</dbReference>
<dbReference type="GO" id="GO:0004488">
    <property type="term" value="F:methylenetetrahydrofolate dehydrogenase (NADP+) activity"/>
    <property type="evidence" value="ECO:0007669"/>
    <property type="project" value="UniProtKB-UniRule"/>
</dbReference>
<dbReference type="GO" id="GO:0000105">
    <property type="term" value="P:L-histidine biosynthetic process"/>
    <property type="evidence" value="ECO:0007669"/>
    <property type="project" value="UniProtKB-KW"/>
</dbReference>
<dbReference type="GO" id="GO:0009086">
    <property type="term" value="P:methionine biosynthetic process"/>
    <property type="evidence" value="ECO:0007669"/>
    <property type="project" value="UniProtKB-KW"/>
</dbReference>
<dbReference type="GO" id="GO:0006164">
    <property type="term" value="P:purine nucleotide biosynthetic process"/>
    <property type="evidence" value="ECO:0007669"/>
    <property type="project" value="UniProtKB-KW"/>
</dbReference>
<dbReference type="GO" id="GO:0035999">
    <property type="term" value="P:tetrahydrofolate interconversion"/>
    <property type="evidence" value="ECO:0007669"/>
    <property type="project" value="UniProtKB-UniRule"/>
</dbReference>
<dbReference type="CDD" id="cd01080">
    <property type="entry name" value="NAD_bind_m-THF_DH_Cyclohyd"/>
    <property type="match status" value="1"/>
</dbReference>
<dbReference type="Gene3D" id="3.40.50.10860">
    <property type="entry name" value="Leucine Dehydrogenase, chain A, domain 1"/>
    <property type="match status" value="1"/>
</dbReference>
<dbReference type="Gene3D" id="3.40.50.720">
    <property type="entry name" value="NAD(P)-binding Rossmann-like Domain"/>
    <property type="match status" value="1"/>
</dbReference>
<dbReference type="HAMAP" id="MF_01576">
    <property type="entry name" value="THF_DHG_CYH"/>
    <property type="match status" value="1"/>
</dbReference>
<dbReference type="InterPro" id="IPR046346">
    <property type="entry name" value="Aminoacid_DH-like_N_sf"/>
</dbReference>
<dbReference type="InterPro" id="IPR036291">
    <property type="entry name" value="NAD(P)-bd_dom_sf"/>
</dbReference>
<dbReference type="InterPro" id="IPR000672">
    <property type="entry name" value="THF_DH/CycHdrlase"/>
</dbReference>
<dbReference type="InterPro" id="IPR020630">
    <property type="entry name" value="THF_DH/CycHdrlase_cat_dom"/>
</dbReference>
<dbReference type="InterPro" id="IPR020631">
    <property type="entry name" value="THF_DH/CycHdrlase_NAD-bd_dom"/>
</dbReference>
<dbReference type="PANTHER" id="PTHR48099:SF5">
    <property type="entry name" value="C-1-TETRAHYDROFOLATE SYNTHASE, CYTOPLASMIC"/>
    <property type="match status" value="1"/>
</dbReference>
<dbReference type="PANTHER" id="PTHR48099">
    <property type="entry name" value="C-1-TETRAHYDROFOLATE SYNTHASE, CYTOPLASMIC-RELATED"/>
    <property type="match status" value="1"/>
</dbReference>
<dbReference type="Pfam" id="PF00763">
    <property type="entry name" value="THF_DHG_CYH"/>
    <property type="match status" value="1"/>
</dbReference>
<dbReference type="Pfam" id="PF02882">
    <property type="entry name" value="THF_DHG_CYH_C"/>
    <property type="match status" value="1"/>
</dbReference>
<dbReference type="PRINTS" id="PR00085">
    <property type="entry name" value="THFDHDRGNASE"/>
</dbReference>
<dbReference type="SUPFAM" id="SSF53223">
    <property type="entry name" value="Aminoacid dehydrogenase-like, N-terminal domain"/>
    <property type="match status" value="1"/>
</dbReference>
<dbReference type="SUPFAM" id="SSF51735">
    <property type="entry name" value="NAD(P)-binding Rossmann-fold domains"/>
    <property type="match status" value="1"/>
</dbReference>
<protein>
    <recommendedName>
        <fullName evidence="1">Bifunctional protein FolD 1</fullName>
    </recommendedName>
    <domain>
        <recommendedName>
            <fullName evidence="1">Methylenetetrahydrofolate dehydrogenase</fullName>
            <ecNumber evidence="1">1.5.1.5</ecNumber>
        </recommendedName>
    </domain>
    <domain>
        <recommendedName>
            <fullName evidence="1">Methenyltetrahydrofolate cyclohydrolase</fullName>
            <ecNumber evidence="1">3.5.4.9</ecNumber>
        </recommendedName>
    </domain>
</protein>
<name>FOLD1_PAEAT</name>
<organism>
    <name type="scientific">Paenarthrobacter aurescens (strain TC1)</name>
    <dbReference type="NCBI Taxonomy" id="290340"/>
    <lineage>
        <taxon>Bacteria</taxon>
        <taxon>Bacillati</taxon>
        <taxon>Actinomycetota</taxon>
        <taxon>Actinomycetes</taxon>
        <taxon>Micrococcales</taxon>
        <taxon>Micrococcaceae</taxon>
        <taxon>Paenarthrobacter</taxon>
    </lineage>
</organism>
<accession>A1R228</accession>
<evidence type="ECO:0000255" key="1">
    <source>
        <dbReference type="HAMAP-Rule" id="MF_01576"/>
    </source>
</evidence>
<feature type="chain" id="PRO_0000305790" description="Bifunctional protein FolD 1">
    <location>
        <begin position="1"/>
        <end position="294"/>
    </location>
</feature>
<feature type="binding site" evidence="1">
    <location>
        <begin position="165"/>
        <end position="167"/>
    </location>
    <ligand>
        <name>NADP(+)</name>
        <dbReference type="ChEBI" id="CHEBI:58349"/>
    </ligand>
</feature>
<feature type="binding site" evidence="1">
    <location>
        <position position="190"/>
    </location>
    <ligand>
        <name>NADP(+)</name>
        <dbReference type="ChEBI" id="CHEBI:58349"/>
    </ligand>
</feature>
<feature type="binding site" evidence="1">
    <location>
        <position position="231"/>
    </location>
    <ligand>
        <name>NADP(+)</name>
        <dbReference type="ChEBI" id="CHEBI:58349"/>
    </ligand>
</feature>
<sequence>MTTEVLSGKPLAAIIQQRAHEETALLDDEGVRPVLAVVVATDDESTHWYVRSIERAAGRAGIGCRIIDLGHDATEQVLASVLADLSAEPTVHGIILQTPLPAAVRADRLVGLIAPEKDIDGANPLSLGRLAVGQPAFAPATAQAVVELLDHFQIPVAGRNVAVVGRSAVVGKPLSLLLLERDATVTICHSKSGPLERYTQPADVVVVAAGRTGLLKGSHLSPETVVIDVGTNVLPDGSLVGDVDEASVTGVAAGLSPVPGGVGSVTTALLLLHTVEAARQQSRSGLLTASTSRI</sequence>
<keyword id="KW-0028">Amino-acid biosynthesis</keyword>
<keyword id="KW-0368">Histidine biosynthesis</keyword>
<keyword id="KW-0378">Hydrolase</keyword>
<keyword id="KW-0486">Methionine biosynthesis</keyword>
<keyword id="KW-0511">Multifunctional enzyme</keyword>
<keyword id="KW-0521">NADP</keyword>
<keyword id="KW-0554">One-carbon metabolism</keyword>
<keyword id="KW-0560">Oxidoreductase</keyword>
<keyword id="KW-0658">Purine biosynthesis</keyword>
<reference key="1">
    <citation type="journal article" date="2006" name="PLoS Genet.">
        <title>Secrets of soil survival revealed by the genome sequence of Arthrobacter aurescens TC1.</title>
        <authorList>
            <person name="Mongodin E.F."/>
            <person name="Shapir N."/>
            <person name="Daugherty S.C."/>
            <person name="DeBoy R.T."/>
            <person name="Emerson J.B."/>
            <person name="Shvartzbeyn A."/>
            <person name="Radune D."/>
            <person name="Vamathevan J."/>
            <person name="Riggs F."/>
            <person name="Grinberg V."/>
            <person name="Khouri H.M."/>
            <person name="Wackett L.P."/>
            <person name="Nelson K.E."/>
            <person name="Sadowsky M.J."/>
        </authorList>
    </citation>
    <scope>NUCLEOTIDE SEQUENCE [LARGE SCALE GENOMIC DNA]</scope>
    <source>
        <strain>TC1</strain>
    </source>
</reference>
<proteinExistence type="inferred from homology"/>
<gene>
    <name evidence="1" type="primary">folD1</name>
    <name type="ordered locus">AAur_0482</name>
</gene>